<name>NTPP1_JANSC</name>
<accession>Q28VZ8</accession>
<protein>
    <recommendedName>
        <fullName evidence="1">Nucleoside triphosphate pyrophosphatase 1</fullName>
        <ecNumber evidence="1">3.6.1.9</ecNumber>
    </recommendedName>
    <alternativeName>
        <fullName evidence="1">Nucleotide pyrophosphatase 1</fullName>
        <shortName evidence="1">Nucleotide PPase 1</shortName>
    </alternativeName>
</protein>
<reference key="1">
    <citation type="submission" date="2006-02" db="EMBL/GenBank/DDBJ databases">
        <title>Complete sequence of chromosome of Jannaschia sp. CCS1.</title>
        <authorList>
            <consortium name="US DOE Joint Genome Institute"/>
            <person name="Copeland A."/>
            <person name="Lucas S."/>
            <person name="Lapidus A."/>
            <person name="Barry K."/>
            <person name="Detter J.C."/>
            <person name="Glavina del Rio T."/>
            <person name="Hammon N."/>
            <person name="Israni S."/>
            <person name="Pitluck S."/>
            <person name="Brettin T."/>
            <person name="Bruce D."/>
            <person name="Han C."/>
            <person name="Tapia R."/>
            <person name="Gilna P."/>
            <person name="Chertkov O."/>
            <person name="Saunders E."/>
            <person name="Schmutz J."/>
            <person name="Larimer F."/>
            <person name="Land M."/>
            <person name="Kyrpides N."/>
            <person name="Lykidis A."/>
            <person name="Moran M.A."/>
            <person name="Belas R."/>
            <person name="Ye W."/>
            <person name="Buchan A."/>
            <person name="Gonzalez J.M."/>
            <person name="Schell M.A."/>
            <person name="Richardson P."/>
        </authorList>
    </citation>
    <scope>NUCLEOTIDE SEQUENCE [LARGE SCALE GENOMIC DNA]</scope>
    <source>
        <strain>CCS1</strain>
    </source>
</reference>
<keyword id="KW-0963">Cytoplasm</keyword>
<keyword id="KW-0378">Hydrolase</keyword>
<keyword id="KW-0546">Nucleotide metabolism</keyword>
<keyword id="KW-1185">Reference proteome</keyword>
<organism>
    <name type="scientific">Jannaschia sp. (strain CCS1)</name>
    <dbReference type="NCBI Taxonomy" id="290400"/>
    <lineage>
        <taxon>Bacteria</taxon>
        <taxon>Pseudomonadati</taxon>
        <taxon>Pseudomonadota</taxon>
        <taxon>Alphaproteobacteria</taxon>
        <taxon>Rhodobacterales</taxon>
        <taxon>Roseobacteraceae</taxon>
        <taxon>Jannaschia</taxon>
    </lineage>
</organism>
<comment type="function">
    <text evidence="1">Nucleoside triphosphate pyrophosphatase. May have a dual role in cell division arrest and in preventing the incorporation of modified nucleotides into cellular nucleic acids.</text>
</comment>
<comment type="catalytic activity">
    <reaction evidence="1">
        <text>a ribonucleoside 5'-triphosphate + H2O = a ribonucleoside 5'-phosphate + diphosphate + H(+)</text>
        <dbReference type="Rhea" id="RHEA:23996"/>
        <dbReference type="ChEBI" id="CHEBI:15377"/>
        <dbReference type="ChEBI" id="CHEBI:15378"/>
        <dbReference type="ChEBI" id="CHEBI:33019"/>
        <dbReference type="ChEBI" id="CHEBI:58043"/>
        <dbReference type="ChEBI" id="CHEBI:61557"/>
        <dbReference type="EC" id="3.6.1.9"/>
    </reaction>
</comment>
<comment type="catalytic activity">
    <reaction evidence="1">
        <text>a 2'-deoxyribonucleoside 5'-triphosphate + H2O = a 2'-deoxyribonucleoside 5'-phosphate + diphosphate + H(+)</text>
        <dbReference type="Rhea" id="RHEA:44644"/>
        <dbReference type="ChEBI" id="CHEBI:15377"/>
        <dbReference type="ChEBI" id="CHEBI:15378"/>
        <dbReference type="ChEBI" id="CHEBI:33019"/>
        <dbReference type="ChEBI" id="CHEBI:61560"/>
        <dbReference type="ChEBI" id="CHEBI:65317"/>
        <dbReference type="EC" id="3.6.1.9"/>
    </reaction>
</comment>
<comment type="cofactor">
    <cofactor evidence="1">
        <name>a divalent metal cation</name>
        <dbReference type="ChEBI" id="CHEBI:60240"/>
    </cofactor>
</comment>
<comment type="subcellular location">
    <subcellularLocation>
        <location evidence="1">Cytoplasm</location>
    </subcellularLocation>
</comment>
<comment type="similarity">
    <text evidence="1">Belongs to the Maf family.</text>
</comment>
<proteinExistence type="inferred from homology"/>
<sequence>MSRLILASASAARRSLLQNAGLAFESLPVRIDEDAIRQSLITEGATPRDIADALAEFKARKATERAPGHLILASDQILALRGEIFAKPRDREDAARDLHRLSGHTHHLYSAAVIYEDAKPVWRGVGTARLSMHTHSEAQINAYLDQAWPDVSSSVGAYHAEGLGAQLFSRIEGDWFSVLGLPLLQVLSYLRMRGMVAP</sequence>
<gene>
    <name type="ordered locus">Jann_0197</name>
</gene>
<dbReference type="EC" id="3.6.1.9" evidence="1"/>
<dbReference type="EMBL" id="CP000264">
    <property type="protein sequence ID" value="ABD53114.1"/>
    <property type="molecule type" value="Genomic_DNA"/>
</dbReference>
<dbReference type="RefSeq" id="WP_011453323.1">
    <property type="nucleotide sequence ID" value="NC_007802.1"/>
</dbReference>
<dbReference type="SMR" id="Q28VZ8"/>
<dbReference type="STRING" id="290400.Jann_0197"/>
<dbReference type="KEGG" id="jan:Jann_0197"/>
<dbReference type="eggNOG" id="COG0424">
    <property type="taxonomic scope" value="Bacteria"/>
</dbReference>
<dbReference type="HOGENOM" id="CLU_040416_1_1_5"/>
<dbReference type="OrthoDB" id="9813962at2"/>
<dbReference type="Proteomes" id="UP000008326">
    <property type="component" value="Chromosome"/>
</dbReference>
<dbReference type="GO" id="GO:0005737">
    <property type="term" value="C:cytoplasm"/>
    <property type="evidence" value="ECO:0007669"/>
    <property type="project" value="UniProtKB-SubCell"/>
</dbReference>
<dbReference type="GO" id="GO:0047429">
    <property type="term" value="F:nucleoside triphosphate diphosphatase activity"/>
    <property type="evidence" value="ECO:0007669"/>
    <property type="project" value="UniProtKB-EC"/>
</dbReference>
<dbReference type="GO" id="GO:0009117">
    <property type="term" value="P:nucleotide metabolic process"/>
    <property type="evidence" value="ECO:0007669"/>
    <property type="project" value="UniProtKB-KW"/>
</dbReference>
<dbReference type="CDD" id="cd00555">
    <property type="entry name" value="Maf"/>
    <property type="match status" value="1"/>
</dbReference>
<dbReference type="Gene3D" id="3.90.950.10">
    <property type="match status" value="1"/>
</dbReference>
<dbReference type="HAMAP" id="MF_00528">
    <property type="entry name" value="Maf"/>
    <property type="match status" value="1"/>
</dbReference>
<dbReference type="InterPro" id="IPR029001">
    <property type="entry name" value="ITPase-like_fam"/>
</dbReference>
<dbReference type="InterPro" id="IPR003697">
    <property type="entry name" value="Maf-like"/>
</dbReference>
<dbReference type="PANTHER" id="PTHR43213">
    <property type="entry name" value="BIFUNCTIONAL DTTP/UTP PYROPHOSPHATASE/METHYLTRANSFERASE PROTEIN-RELATED"/>
    <property type="match status" value="1"/>
</dbReference>
<dbReference type="PANTHER" id="PTHR43213:SF5">
    <property type="entry name" value="BIFUNCTIONAL DTTP_UTP PYROPHOSPHATASE_METHYLTRANSFERASE PROTEIN-RELATED"/>
    <property type="match status" value="1"/>
</dbReference>
<dbReference type="Pfam" id="PF02545">
    <property type="entry name" value="Maf"/>
    <property type="match status" value="1"/>
</dbReference>
<dbReference type="PIRSF" id="PIRSF006305">
    <property type="entry name" value="Maf"/>
    <property type="match status" value="1"/>
</dbReference>
<dbReference type="SUPFAM" id="SSF52972">
    <property type="entry name" value="ITPase-like"/>
    <property type="match status" value="1"/>
</dbReference>
<feature type="chain" id="PRO_0000267325" description="Nucleoside triphosphate pyrophosphatase 1">
    <location>
        <begin position="1"/>
        <end position="198"/>
    </location>
</feature>
<feature type="active site" description="Proton acceptor" evidence="1">
    <location>
        <position position="75"/>
    </location>
</feature>
<evidence type="ECO:0000255" key="1">
    <source>
        <dbReference type="HAMAP-Rule" id="MF_00528"/>
    </source>
</evidence>